<feature type="chain" id="PRO_0000116336" description="38 kDa phosphoprotein">
    <location>
        <begin position="1"/>
        <end position="290"/>
    </location>
</feature>
<feature type="transmembrane region" description="Helical" evidence="1">
    <location>
        <begin position="226"/>
        <end position="246"/>
    </location>
</feature>
<feature type="transmembrane region" description="Helical" evidence="1">
    <location>
        <begin position="255"/>
        <end position="275"/>
    </location>
</feature>
<feature type="region of interest" description="Disordered" evidence="2">
    <location>
        <begin position="1"/>
        <end position="49"/>
    </location>
</feature>
<feature type="region of interest" description="Disordered" evidence="2">
    <location>
        <begin position="67"/>
        <end position="87"/>
    </location>
</feature>
<feature type="region of interest" description="Disordered" evidence="2">
    <location>
        <begin position="111"/>
        <end position="146"/>
    </location>
</feature>
<feature type="compositionally biased region" description="Basic and acidic residues" evidence="2">
    <location>
        <begin position="34"/>
        <end position="49"/>
    </location>
</feature>
<feature type="compositionally biased region" description="Basic and acidic residues" evidence="2">
    <location>
        <begin position="113"/>
        <end position="145"/>
    </location>
</feature>
<keyword id="KW-0002">3D-structure</keyword>
<keyword id="KW-0472">Membrane</keyword>
<keyword id="KW-0597">Phosphoprotein</keyword>
<keyword id="KW-0812">Transmembrane</keyword>
<keyword id="KW-1133">Transmembrane helix</keyword>
<evidence type="ECO:0000255" key="1"/>
<evidence type="ECO:0000256" key="2">
    <source>
        <dbReference type="SAM" id="MobiDB-lite"/>
    </source>
</evidence>
<evidence type="ECO:0000305" key="3"/>
<organismHost>
    <name type="scientific">Gallus gallus</name>
    <name type="common">Chicken</name>
    <dbReference type="NCBI Taxonomy" id="9031"/>
</organismHost>
<accession>P68348</accession>
<accession>P30023</accession>
<accession>P31633</accession>
<dbReference type="EMBL" id="M74036">
    <property type="protein sequence ID" value="AAA46113.1"/>
    <property type="molecule type" value="Genomic_DNA"/>
</dbReference>
<dbReference type="PDB" id="7PDY">
    <property type="method" value="X-ray"/>
    <property type="resolution" value="2.54 A"/>
    <property type="chains" value="B/D/F=171-185"/>
</dbReference>
<dbReference type="PDBsum" id="7PDY"/>
<dbReference type="SMR" id="P68348"/>
<dbReference type="GO" id="GO:0016020">
    <property type="term" value="C:membrane"/>
    <property type="evidence" value="ECO:0007669"/>
    <property type="project" value="UniProtKB-SubCell"/>
</dbReference>
<dbReference type="InterPro" id="IPR006930">
    <property type="entry name" value="Herpes_pp38"/>
</dbReference>
<dbReference type="Pfam" id="PF04846">
    <property type="entry name" value="Herpes_pp38"/>
    <property type="match status" value="1"/>
</dbReference>
<gene>
    <name type="primary">PP38</name>
</gene>
<protein>
    <recommendedName>
        <fullName>38 kDa phosphoprotein</fullName>
    </recommendedName>
    <alternativeName>
        <fullName>Phosphoprotein pp38</fullName>
    </alternativeName>
</protein>
<reference key="1">
    <citation type="journal article" date="1991" name="J. Virol.">
        <title>Structural analysis and transcriptional mapping of the Marek's disease virus gene encoding pp38, an antigen associated with transformed cells.</title>
        <authorList>
            <person name="Cui Z."/>
            <person name="Lee L.F."/>
            <person name="Liu J.-L."/>
            <person name="Kung H.-J."/>
        </authorList>
    </citation>
    <scope>NUCLEOTIDE SEQUENCE [GENOMIC DNA]</scope>
</reference>
<comment type="subcellular location">
    <subcellularLocation>
        <location evidence="3">Membrane</location>
        <topology evidence="3">Multi-pass membrane protein</topology>
    </subcellularLocation>
</comment>
<comment type="PTM">
    <text>Phosphorylated.</text>
</comment>
<comment type="miscellaneous">
    <text>Expressed in both lytically infected cells and latently infected lymphoblastoid tumor cells.</text>
</comment>
<name>VP38_GAHVN</name>
<proteinExistence type="evidence at protein level"/>
<sequence length="290" mass="31169">MEFEAEHEGLTASWVAPAPQGGKGAEGRAGVADEAGHGKTEAECAEDGEKCGDAEMSALDRVQRDRWRFSSPPPHSGVTGKGAIPIKGDGKAIECQELTGEGEWLSQWEELPPEPRRSGNEHLDESRYAKQTERGSSTGKEEGDGMKQMGELAQQCEGGTYADLLVEAEQAVVHSVRALMLAERQNPNILGEHLNKKRVLVQRPRTILSVESENATMRSYMLVTLICSAKSLLLGSCMSFFAGMLVGRTADVKTPLWDTVCLLMAFCAGIVVGGVDSGEVESGETKSESN</sequence>
<organism>
    <name type="scientific">Gallid herpesvirus 2 (strain MD11/75C/R2)</name>
    <name type="common">GaHV-2</name>
    <name type="synonym">Marek's disease herpesvirus type 1</name>
    <dbReference type="NCBI Taxonomy" id="31527"/>
    <lineage>
        <taxon>Viruses</taxon>
        <taxon>Duplodnaviria</taxon>
        <taxon>Heunggongvirae</taxon>
        <taxon>Peploviricota</taxon>
        <taxon>Herviviricetes</taxon>
        <taxon>Herpesvirales</taxon>
        <taxon>Orthoherpesviridae</taxon>
        <taxon>Alphaherpesvirinae</taxon>
        <taxon>Mardivirus</taxon>
        <taxon>Mardivirus gallidalpha2</taxon>
        <taxon>Gallid alphaherpesvirus 2</taxon>
    </lineage>
</organism>